<reference key="1">
    <citation type="journal article" date="2000" name="Science">
        <title>The genome sequence of Drosophila melanogaster.</title>
        <authorList>
            <person name="Adams M.D."/>
            <person name="Celniker S.E."/>
            <person name="Holt R.A."/>
            <person name="Evans C.A."/>
            <person name="Gocayne J.D."/>
            <person name="Amanatides P.G."/>
            <person name="Scherer S.E."/>
            <person name="Li P.W."/>
            <person name="Hoskins R.A."/>
            <person name="Galle R.F."/>
            <person name="George R.A."/>
            <person name="Lewis S.E."/>
            <person name="Richards S."/>
            <person name="Ashburner M."/>
            <person name="Henderson S.N."/>
            <person name="Sutton G.G."/>
            <person name="Wortman J.R."/>
            <person name="Yandell M.D."/>
            <person name="Zhang Q."/>
            <person name="Chen L.X."/>
            <person name="Brandon R.C."/>
            <person name="Rogers Y.-H.C."/>
            <person name="Blazej R.G."/>
            <person name="Champe M."/>
            <person name="Pfeiffer B.D."/>
            <person name="Wan K.H."/>
            <person name="Doyle C."/>
            <person name="Baxter E.G."/>
            <person name="Helt G."/>
            <person name="Nelson C.R."/>
            <person name="Miklos G.L.G."/>
            <person name="Abril J.F."/>
            <person name="Agbayani A."/>
            <person name="An H.-J."/>
            <person name="Andrews-Pfannkoch C."/>
            <person name="Baldwin D."/>
            <person name="Ballew R.M."/>
            <person name="Basu A."/>
            <person name="Baxendale J."/>
            <person name="Bayraktaroglu L."/>
            <person name="Beasley E.M."/>
            <person name="Beeson K.Y."/>
            <person name="Benos P.V."/>
            <person name="Berman B.P."/>
            <person name="Bhandari D."/>
            <person name="Bolshakov S."/>
            <person name="Borkova D."/>
            <person name="Botchan M.R."/>
            <person name="Bouck J."/>
            <person name="Brokstein P."/>
            <person name="Brottier P."/>
            <person name="Burtis K.C."/>
            <person name="Busam D.A."/>
            <person name="Butler H."/>
            <person name="Cadieu E."/>
            <person name="Center A."/>
            <person name="Chandra I."/>
            <person name="Cherry J.M."/>
            <person name="Cawley S."/>
            <person name="Dahlke C."/>
            <person name="Davenport L.B."/>
            <person name="Davies P."/>
            <person name="de Pablos B."/>
            <person name="Delcher A."/>
            <person name="Deng Z."/>
            <person name="Mays A.D."/>
            <person name="Dew I."/>
            <person name="Dietz S.M."/>
            <person name="Dodson K."/>
            <person name="Doup L.E."/>
            <person name="Downes M."/>
            <person name="Dugan-Rocha S."/>
            <person name="Dunkov B.C."/>
            <person name="Dunn P."/>
            <person name="Durbin K.J."/>
            <person name="Evangelista C.C."/>
            <person name="Ferraz C."/>
            <person name="Ferriera S."/>
            <person name="Fleischmann W."/>
            <person name="Fosler C."/>
            <person name="Gabrielian A.E."/>
            <person name="Garg N.S."/>
            <person name="Gelbart W.M."/>
            <person name="Glasser K."/>
            <person name="Glodek A."/>
            <person name="Gong F."/>
            <person name="Gorrell J.H."/>
            <person name="Gu Z."/>
            <person name="Guan P."/>
            <person name="Harris M."/>
            <person name="Harris N.L."/>
            <person name="Harvey D.A."/>
            <person name="Heiman T.J."/>
            <person name="Hernandez J.R."/>
            <person name="Houck J."/>
            <person name="Hostin D."/>
            <person name="Houston K.A."/>
            <person name="Howland T.J."/>
            <person name="Wei M.-H."/>
            <person name="Ibegwam C."/>
            <person name="Jalali M."/>
            <person name="Kalush F."/>
            <person name="Karpen G.H."/>
            <person name="Ke Z."/>
            <person name="Kennison J.A."/>
            <person name="Ketchum K.A."/>
            <person name="Kimmel B.E."/>
            <person name="Kodira C.D."/>
            <person name="Kraft C.L."/>
            <person name="Kravitz S."/>
            <person name="Kulp D."/>
            <person name="Lai Z."/>
            <person name="Lasko P."/>
            <person name="Lei Y."/>
            <person name="Levitsky A.A."/>
            <person name="Li J.H."/>
            <person name="Li Z."/>
            <person name="Liang Y."/>
            <person name="Lin X."/>
            <person name="Liu X."/>
            <person name="Mattei B."/>
            <person name="McIntosh T.C."/>
            <person name="McLeod M.P."/>
            <person name="McPherson D."/>
            <person name="Merkulov G."/>
            <person name="Milshina N.V."/>
            <person name="Mobarry C."/>
            <person name="Morris J."/>
            <person name="Moshrefi A."/>
            <person name="Mount S.M."/>
            <person name="Moy M."/>
            <person name="Murphy B."/>
            <person name="Murphy L."/>
            <person name="Muzny D.M."/>
            <person name="Nelson D.L."/>
            <person name="Nelson D.R."/>
            <person name="Nelson K.A."/>
            <person name="Nixon K."/>
            <person name="Nusskern D.R."/>
            <person name="Pacleb J.M."/>
            <person name="Palazzolo M."/>
            <person name="Pittman G.S."/>
            <person name="Pan S."/>
            <person name="Pollard J."/>
            <person name="Puri V."/>
            <person name="Reese M.G."/>
            <person name="Reinert K."/>
            <person name="Remington K."/>
            <person name="Saunders R.D.C."/>
            <person name="Scheeler F."/>
            <person name="Shen H."/>
            <person name="Shue B.C."/>
            <person name="Siden-Kiamos I."/>
            <person name="Simpson M."/>
            <person name="Skupski M.P."/>
            <person name="Smith T.J."/>
            <person name="Spier E."/>
            <person name="Spradling A.C."/>
            <person name="Stapleton M."/>
            <person name="Strong R."/>
            <person name="Sun E."/>
            <person name="Svirskas R."/>
            <person name="Tector C."/>
            <person name="Turner R."/>
            <person name="Venter E."/>
            <person name="Wang A.H."/>
            <person name="Wang X."/>
            <person name="Wang Z.-Y."/>
            <person name="Wassarman D.A."/>
            <person name="Weinstock G.M."/>
            <person name="Weissenbach J."/>
            <person name="Williams S.M."/>
            <person name="Woodage T."/>
            <person name="Worley K.C."/>
            <person name="Wu D."/>
            <person name="Yang S."/>
            <person name="Yao Q.A."/>
            <person name="Ye J."/>
            <person name="Yeh R.-F."/>
            <person name="Zaveri J.S."/>
            <person name="Zhan M."/>
            <person name="Zhang G."/>
            <person name="Zhao Q."/>
            <person name="Zheng L."/>
            <person name="Zheng X.H."/>
            <person name="Zhong F.N."/>
            <person name="Zhong W."/>
            <person name="Zhou X."/>
            <person name="Zhu S.C."/>
            <person name="Zhu X."/>
            <person name="Smith H.O."/>
            <person name="Gibbs R.A."/>
            <person name="Myers E.W."/>
            <person name="Rubin G.M."/>
            <person name="Venter J.C."/>
        </authorList>
    </citation>
    <scope>NUCLEOTIDE SEQUENCE [LARGE SCALE GENOMIC DNA]</scope>
    <source>
        <strain>Berkeley</strain>
    </source>
</reference>
<reference key="2">
    <citation type="journal article" date="2002" name="Genome Biol.">
        <title>Annotation of the Drosophila melanogaster euchromatic genome: a systematic review.</title>
        <authorList>
            <person name="Misra S."/>
            <person name="Crosby M.A."/>
            <person name="Mungall C.J."/>
            <person name="Matthews B.B."/>
            <person name="Campbell K.S."/>
            <person name="Hradecky P."/>
            <person name="Huang Y."/>
            <person name="Kaminker J.S."/>
            <person name="Millburn G.H."/>
            <person name="Prochnik S.E."/>
            <person name="Smith C.D."/>
            <person name="Tupy J.L."/>
            <person name="Whitfield E.J."/>
            <person name="Bayraktaroglu L."/>
            <person name="Berman B.P."/>
            <person name="Bettencourt B.R."/>
            <person name="Celniker S.E."/>
            <person name="de Grey A.D.N.J."/>
            <person name="Drysdale R.A."/>
            <person name="Harris N.L."/>
            <person name="Richter J."/>
            <person name="Russo S."/>
            <person name="Schroeder A.J."/>
            <person name="Shu S.Q."/>
            <person name="Stapleton M."/>
            <person name="Yamada C."/>
            <person name="Ashburner M."/>
            <person name="Gelbart W.M."/>
            <person name="Rubin G.M."/>
            <person name="Lewis S.E."/>
        </authorList>
    </citation>
    <scope>GENOME REANNOTATION</scope>
    <source>
        <strain>Berkeley</strain>
    </source>
</reference>
<reference key="3">
    <citation type="journal article" date="2002" name="Genome Biol.">
        <title>A Drosophila full-length cDNA resource.</title>
        <authorList>
            <person name="Stapleton M."/>
            <person name="Carlson J.W."/>
            <person name="Brokstein P."/>
            <person name="Yu C."/>
            <person name="Champe M."/>
            <person name="George R.A."/>
            <person name="Guarin H."/>
            <person name="Kronmiller B."/>
            <person name="Pacleb J.M."/>
            <person name="Park S."/>
            <person name="Wan K.H."/>
            <person name="Rubin G.M."/>
            <person name="Celniker S.E."/>
        </authorList>
    </citation>
    <scope>NUCLEOTIDE SEQUENCE [LARGE SCALE MRNA] (ISOFORM B)</scope>
    <source>
        <strain>Berkeley</strain>
        <tissue>Testis</tissue>
    </source>
</reference>
<reference key="4">
    <citation type="submission" date="2008-09" db="EMBL/GenBank/DDBJ databases">
        <authorList>
            <person name="Carlson J.W."/>
            <person name="Booth B."/>
            <person name="Frise E."/>
            <person name="Park S."/>
            <person name="Wan K.H."/>
            <person name="Yu C."/>
            <person name="Celniker S.E."/>
        </authorList>
    </citation>
    <scope>NUCLEOTIDE SEQUENCE [LARGE SCALE MRNA] (ISOFORM A)</scope>
    <source>
        <strain>Berkeley</strain>
        <tissue>Testis</tissue>
    </source>
</reference>
<reference key="5">
    <citation type="journal article" date="2008" name="Proc. Natl. Acad. Sci. U.S.A.">
        <title>GLD2 poly(A) polymerase is required for long-term memory.</title>
        <authorList>
            <person name="Kwak J.E."/>
            <person name="Drier E."/>
            <person name="Barbee S.A."/>
            <person name="Ramaswami M."/>
            <person name="Yin J.C.P."/>
            <person name="Wickens M."/>
        </authorList>
    </citation>
    <scope>FUNCTION</scope>
    <scope>CATALYTIC ACTIVITY</scope>
    <scope>INTERACTION WITH FMR1 AND EIF-4E</scope>
    <scope>SUBCELLULAR LOCATION</scope>
    <scope>TISSUE SPECIFICITY</scope>
    <scope>DEVELOPMENTAL STAGE</scope>
    <scope>MUTAGENESIS OF ASP-995</scope>
</reference>
<protein>
    <recommendedName>
        <fullName>Poly(A) RNA polymerase gld-2 homolog A</fullName>
        <shortName>DmGLD2</shortName>
        <ecNumber evidence="3">2.7.7.19</ecNumber>
    </recommendedName>
</protein>
<accession>Q9VD44</accession>
<accession>B5RJK9</accession>
<accession>Q8MR77</accession>
<gene>
    <name type="primary">Gld2</name>
    <name type="ORF">CG5732</name>
</gene>
<comment type="function">
    <text evidence="3">Cytoplasmic poly(A) RNA polymerase that adds successive AMP monomers to the 3'-end of specific RNAs, forming a poly(A) tail. In contrast to the canonical nuclear poly(A) RNA polymerase, it only adds poly(A) to selected cytoplasmic mRNAs. Required for formation of long term memory.</text>
</comment>
<comment type="catalytic activity">
    <reaction evidence="3">
        <text>RNA(n) + ATP = RNA(n)-3'-adenine ribonucleotide + diphosphate</text>
        <dbReference type="Rhea" id="RHEA:11332"/>
        <dbReference type="Rhea" id="RHEA-COMP:14527"/>
        <dbReference type="Rhea" id="RHEA-COMP:17347"/>
        <dbReference type="ChEBI" id="CHEBI:30616"/>
        <dbReference type="ChEBI" id="CHEBI:33019"/>
        <dbReference type="ChEBI" id="CHEBI:140395"/>
        <dbReference type="ChEBI" id="CHEBI:173115"/>
        <dbReference type="EC" id="2.7.7.19"/>
    </reaction>
    <physiologicalReaction direction="left-to-right" evidence="3">
        <dbReference type="Rhea" id="RHEA:11333"/>
    </physiologicalReaction>
</comment>
<comment type="cofactor">
    <cofactor evidence="1">
        <name>Mg(2+)</name>
        <dbReference type="ChEBI" id="CHEBI:18420"/>
    </cofactor>
    <cofactor evidence="1">
        <name>Mn(2+)</name>
        <dbReference type="ChEBI" id="CHEBI:29035"/>
    </cofactor>
</comment>
<comment type="subunit">
    <text evidence="3">Interacts with Fmr1 and eIF-4E.</text>
</comment>
<comment type="subcellular location">
    <subcellularLocation>
        <location evidence="3">Cytoplasm</location>
    </subcellularLocation>
    <subcellularLocation>
        <location evidence="3">Nucleus</location>
    </subcellularLocation>
    <text>Found in neuronal cytoplasm, present in discrete neuronal particles associated with mRNA control, and in nuclear puncta.</text>
</comment>
<comment type="alternative products">
    <event type="alternative splicing"/>
    <isoform>
        <id>Q9VD44-1</id>
        <name>A</name>
        <sequence type="displayed"/>
    </isoform>
    <isoform>
        <id>Q9VD44-2</id>
        <name>B</name>
        <sequence type="described" ref="VSP_034331"/>
    </isoform>
</comment>
<comment type="tissue specificity">
    <text evidence="3">Expressed in the brain.</text>
</comment>
<comment type="developmental stage">
    <text evidence="3">Expressed in larvae, pupae and adults.</text>
</comment>
<comment type="similarity">
    <text evidence="5">Belongs to the DNA polymerase type-B-like family. GLD2 subfamily.</text>
</comment>
<proteinExistence type="evidence at protein level"/>
<sequence>MSTAMAMAAAASSSAAAATATTTAISNSTNTTASPATTNTINTTTKTITTSEVPLEPASNMAPKALEIEDSGRNEPEDLEHGAAKPLEQRKTTVVHTCPRPPGGYKYSMEFLYGIGSGMAGIPLNIPTPSSITPRTVRSTAPLLTTHMPLLTNMGVAPSRPSGIRYPGSAGGSNGTTVAASTTPSTTVTTSSGSPGSGAEAITSSVSSSGLPAAGLQAAQFICQGYMPTGPQRRLWHAENAVWQFDRNYPYNQAYSPPYGIPMMPVGFEHPYGQRIIYPGYYNQTPPGINPAAVAGLTRTNRPVTQQPHILTQPAVGTTESSEEAPATLGNAPQVSSTWRYGRPGTHRGRHAVPTAAAPALLHRDSKSFYNSIGSGMANGPRFKAPFVANVRNFQAGAVATVAAGGAATTAVVGTSAPATGAASSSDQNVATKRNHQGAATQNNHRNRHNAKKGGKNSVGKELTSNSSESLSNSSSKSQLNKRPSSSSSISPIKHPHRNYRNRMRYTATEPTEQKAATTTVPISNYQPPQQSTSTVRRTSKFQGSNAYQAHTAAGRQQSRFYQSRHMDGYVFQSGHYMVYAAGAPPVGLRPGKSPVSEATGAPPGAAAATAAAATAVAATAAAAEGGGAAEGGGAAAAPVTASSATLEGEQPLDSDFDQRQEFADLGLDPANGGFSSDLEPNGIKQDTSELDTHSCLISHPNSEVDGDDNQSLASFAPSVESDDSDSELSDASVESVARDILVSCLAVATGAEEPDFSGPNLVPYGDMHYLKELDKKNPPTNGYRSHRPYHQSHYAYHSQMSPRGLSCCGDMLNQHSEDLVFKLDQNQPDGIESGKNIFLREITEQPDNISVASNLSCSPSASSSKSVLAPMASKSNITMPEENNDDDELPLVVHNRYWREFFGYTPADRFLLRAKFVEMRRPPKVMGCKNKWDPLSLSVWKKFLESQQTRHVYKIKMRLWRAIYTVAMKNYPRYGLYLVGSSISYFGSKCSDMDICMLACTNPNIDSRMEAVYHLHVMKELLGRTNMFQDFNLIEARVPILRFTDRCHKVEVDINFNNSVGIRNTHLLYCYSQLDWRVRPMALTVKQWAQYHNINNAKNMTISSYSLMLMVIHFLQVGASPPVLPCLHNLYPEKFGLLQPNDFGYVDMNEVMAPYQSDNSQTLGDLLLSFLHYYSVFDYGKYAISIRVGGVLPIEVCRAATAPKNDIHQWNELCIEEPFDQTNTARSVYDTDTFERIKTIFVASYRRLDSTRNLSAIFEDYDGPTILMQQPSVDSEIELYEGQHHRLLPNRGSSRSNSAIPSPRPSILMVDKATTAIWDDINNKPDHPVLSHSNNYDATNECTGNGSLMGLKDNSVADKPPIA</sequence>
<feature type="chain" id="PRO_0000341557" description="Poly(A) RNA polymerase gld-2 homolog A">
    <location>
        <begin position="1"/>
        <end position="1364"/>
    </location>
</feature>
<feature type="domain" description="PAP-associated">
    <location>
        <begin position="1163"/>
        <end position="1224"/>
    </location>
</feature>
<feature type="region of interest" description="Disordered" evidence="2">
    <location>
        <begin position="27"/>
        <end position="97"/>
    </location>
</feature>
<feature type="region of interest" description="Disordered" evidence="2">
    <location>
        <begin position="159"/>
        <end position="203"/>
    </location>
</feature>
<feature type="region of interest" description="Disordered" evidence="2">
    <location>
        <begin position="315"/>
        <end position="338"/>
    </location>
</feature>
<feature type="region of interest" description="Disordered" evidence="2">
    <location>
        <begin position="417"/>
        <end position="535"/>
    </location>
</feature>
<feature type="region of interest" description="Disordered" evidence="2">
    <location>
        <begin position="666"/>
        <end position="732"/>
    </location>
</feature>
<feature type="compositionally biased region" description="Low complexity" evidence="2">
    <location>
        <begin position="27"/>
        <end position="51"/>
    </location>
</feature>
<feature type="compositionally biased region" description="Basic and acidic residues" evidence="2">
    <location>
        <begin position="66"/>
        <end position="91"/>
    </location>
</feature>
<feature type="compositionally biased region" description="Low complexity" evidence="2">
    <location>
        <begin position="175"/>
        <end position="198"/>
    </location>
</feature>
<feature type="compositionally biased region" description="Low complexity" evidence="2">
    <location>
        <begin position="417"/>
        <end position="426"/>
    </location>
</feature>
<feature type="compositionally biased region" description="Polar residues" evidence="2">
    <location>
        <begin position="427"/>
        <end position="444"/>
    </location>
</feature>
<feature type="compositionally biased region" description="Basic residues" evidence="2">
    <location>
        <begin position="445"/>
        <end position="455"/>
    </location>
</feature>
<feature type="compositionally biased region" description="Low complexity" evidence="2">
    <location>
        <begin position="461"/>
        <end position="493"/>
    </location>
</feature>
<feature type="compositionally biased region" description="Basic residues" evidence="2">
    <location>
        <begin position="494"/>
        <end position="504"/>
    </location>
</feature>
<feature type="compositionally biased region" description="Polar residues" evidence="2">
    <location>
        <begin position="509"/>
        <end position="535"/>
    </location>
</feature>
<feature type="binding site" evidence="1">
    <location>
        <position position="993"/>
    </location>
    <ligand>
        <name>Mg(2+)</name>
        <dbReference type="ChEBI" id="CHEBI:18420"/>
        <note>catalytic</note>
    </ligand>
</feature>
<feature type="binding site" evidence="1">
    <location>
        <position position="995"/>
    </location>
    <ligand>
        <name>Mg(2+)</name>
        <dbReference type="ChEBI" id="CHEBI:18420"/>
        <note>catalytic</note>
    </ligand>
</feature>
<feature type="splice variant" id="VSP_034331" description="In isoform B." evidence="4">
    <original>PEENNDDDELPLVVHNRYWREFFGYTPADRFLLRAKFVEMRRPPKVMGCKNKWDPLSLSVWKKFLESQQTRHVYKIKMRLWRAIYTVAMKNYPRYGLYLVGSSISYFGSKCSDMDICMLACTNPNIDSRMEAVYHLHVMKELLGRTNMFQDFNLIEARVPILRFTDRCHKVEVDINFNNSVGIRNTHLLYCYSQLDWRVRPMALTVKQWAQYHNINNAKNMTISSYSLMLMVIHFLQVGASPPVLPCLHNLYPEKFGLLQPNDFGYVDMNEVMAPYQSDNSQTLGDLLLSFLHYYSVFDYGKYAISIRVGGVLPIEVCRAATAPKNDIHQWNELCIEEPFDQTNTARSVYDTDTFERIKTIFVASYRRLDSTRNLSAIFEDYDGPTILMQQPSVDSEIELYEGQHHRLLPNRGSSRSNSAIPSPRPSILMVDKATTAIWDDINNKPDHPVLSHSNNYDATNECTGNGSLMGLKDNSVADKPPIA</original>
    <variation>VGELKNVLLNGQITKFISSKSYFFLSSVCLIVHFIRFTK</variation>
    <location>
        <begin position="881"/>
        <end position="1364"/>
    </location>
</feature>
<feature type="mutagenesis site" description="Destroys active site." evidence="3">
    <original>D</original>
    <variation>A</variation>
    <location>
        <position position="995"/>
    </location>
</feature>
<feature type="sequence conflict" description="In Ref. 3; AAM52588 and 4; ACH95257." evidence="5" ref="3 4">
    <original>I</original>
    <variation>V</variation>
    <location>
        <position position="523"/>
    </location>
</feature>
<feature type="sequence conflict" description="In Ref. 3; AAM52588 and 4; ACH95257." evidence="5" ref="3 4">
    <original>P</original>
    <variation>A</variation>
    <location>
        <position position="591"/>
    </location>
</feature>
<feature type="sequence conflict" description="In Ref. 3; AAM52588 and 4; ACH95257." evidence="5" ref="3 4">
    <original>T</original>
    <variation>TAA</variation>
    <location>
        <position position="610"/>
    </location>
</feature>
<feature type="sequence conflict" description="In Ref. 3; AAM52588." evidence="5" ref="3">
    <original>A</original>
    <variation>T</variation>
    <location>
        <position position="636"/>
    </location>
</feature>
<keyword id="KW-0025">Alternative splicing</keyword>
<keyword id="KW-0067">ATP-binding</keyword>
<keyword id="KW-0963">Cytoplasm</keyword>
<keyword id="KW-0460">Magnesium</keyword>
<keyword id="KW-0464">Manganese</keyword>
<keyword id="KW-0479">Metal-binding</keyword>
<keyword id="KW-0507">mRNA processing</keyword>
<keyword id="KW-0547">Nucleotide-binding</keyword>
<keyword id="KW-0539">Nucleus</keyword>
<keyword id="KW-1185">Reference proteome</keyword>
<keyword id="KW-0694">RNA-binding</keyword>
<keyword id="KW-0808">Transferase</keyword>
<name>GLD2A_DROME</name>
<organism>
    <name type="scientific">Drosophila melanogaster</name>
    <name type="common">Fruit fly</name>
    <dbReference type="NCBI Taxonomy" id="7227"/>
    <lineage>
        <taxon>Eukaryota</taxon>
        <taxon>Metazoa</taxon>
        <taxon>Ecdysozoa</taxon>
        <taxon>Arthropoda</taxon>
        <taxon>Hexapoda</taxon>
        <taxon>Insecta</taxon>
        <taxon>Pterygota</taxon>
        <taxon>Neoptera</taxon>
        <taxon>Endopterygota</taxon>
        <taxon>Diptera</taxon>
        <taxon>Brachycera</taxon>
        <taxon>Muscomorpha</taxon>
        <taxon>Ephydroidea</taxon>
        <taxon>Drosophilidae</taxon>
        <taxon>Drosophila</taxon>
        <taxon>Sophophora</taxon>
    </lineage>
</organism>
<dbReference type="EC" id="2.7.7.19" evidence="3"/>
<dbReference type="EMBL" id="AE014297">
    <property type="protein sequence ID" value="AAF55959.3"/>
    <property type="molecule type" value="Genomic_DNA"/>
</dbReference>
<dbReference type="EMBL" id="AY122076">
    <property type="protein sequence ID" value="AAM52588.1"/>
    <property type="molecule type" value="mRNA"/>
</dbReference>
<dbReference type="EMBL" id="BT044483">
    <property type="protein sequence ID" value="ACH95257.1"/>
    <property type="molecule type" value="mRNA"/>
</dbReference>
<dbReference type="RefSeq" id="NP_001262829.1">
    <molecule id="Q9VD44-1"/>
    <property type="nucleotide sequence ID" value="NM_001275900.1"/>
</dbReference>
<dbReference type="RefSeq" id="NP_651012.2">
    <molecule id="Q9VD44-1"/>
    <property type="nucleotide sequence ID" value="NM_142755.4"/>
</dbReference>
<dbReference type="SMR" id="Q9VD44"/>
<dbReference type="BioGRID" id="67563">
    <property type="interactions" value="4"/>
</dbReference>
<dbReference type="FunCoup" id="Q9VD44">
    <property type="interactions" value="1"/>
</dbReference>
<dbReference type="IntAct" id="Q9VD44">
    <property type="interactions" value="3"/>
</dbReference>
<dbReference type="STRING" id="7227.FBpp0301888"/>
<dbReference type="PaxDb" id="7227-FBpp0301888"/>
<dbReference type="EnsemblMetazoa" id="FBtr0305038">
    <molecule id="Q9VD44-1"/>
    <property type="protein sequence ID" value="FBpp0293575"/>
    <property type="gene ID" value="FBgn0038934"/>
</dbReference>
<dbReference type="EnsemblMetazoa" id="FBtr0310204">
    <molecule id="Q9VD44-1"/>
    <property type="protein sequence ID" value="FBpp0301888"/>
    <property type="gene ID" value="FBgn0038934"/>
</dbReference>
<dbReference type="GeneID" id="42602"/>
<dbReference type="KEGG" id="dme:Dmel_CG5732"/>
<dbReference type="UCSC" id="CG5732-RA">
    <molecule id="Q9VD44-1"/>
    <property type="organism name" value="d. melanogaster"/>
</dbReference>
<dbReference type="AGR" id="FB:FBgn0038934"/>
<dbReference type="CTD" id="42602"/>
<dbReference type="FlyBase" id="FBgn0038934">
    <property type="gene designation" value="Gld2"/>
</dbReference>
<dbReference type="VEuPathDB" id="VectorBase:FBgn0038934"/>
<dbReference type="eggNOG" id="KOG2277">
    <property type="taxonomic scope" value="Eukaryota"/>
</dbReference>
<dbReference type="GeneTree" id="ENSGT00940000156640"/>
<dbReference type="HOGENOM" id="CLU_258575_0_0_1"/>
<dbReference type="InParanoid" id="Q9VD44"/>
<dbReference type="OMA" id="HYYSVFE"/>
<dbReference type="OrthoDB" id="2274644at2759"/>
<dbReference type="PhylomeDB" id="Q9VD44"/>
<dbReference type="BRENDA" id="2.7.7.19">
    <property type="organism ID" value="1994"/>
</dbReference>
<dbReference type="BioGRID-ORCS" id="42602">
    <property type="hits" value="0 hits in 1 CRISPR screen"/>
</dbReference>
<dbReference type="GenomeRNAi" id="42602"/>
<dbReference type="PRO" id="PR:Q9VD44"/>
<dbReference type="Proteomes" id="UP000000803">
    <property type="component" value="Chromosome 3R"/>
</dbReference>
<dbReference type="Bgee" id="FBgn0038934">
    <property type="expression patterns" value="Expressed in spermatocyte in testis and 42 other cell types or tissues"/>
</dbReference>
<dbReference type="ExpressionAtlas" id="Q9VD44">
    <property type="expression patterns" value="baseline and differential"/>
</dbReference>
<dbReference type="GO" id="GO:0005737">
    <property type="term" value="C:cytoplasm"/>
    <property type="evidence" value="ECO:0000314"/>
    <property type="project" value="FlyBase"/>
</dbReference>
<dbReference type="GO" id="GO:0043005">
    <property type="term" value="C:neuron projection"/>
    <property type="evidence" value="ECO:0000314"/>
    <property type="project" value="FlyBase"/>
</dbReference>
<dbReference type="GO" id="GO:0005654">
    <property type="term" value="C:nucleoplasm"/>
    <property type="evidence" value="ECO:0000314"/>
    <property type="project" value="FlyBase"/>
</dbReference>
<dbReference type="GO" id="GO:0005524">
    <property type="term" value="F:ATP binding"/>
    <property type="evidence" value="ECO:0007669"/>
    <property type="project" value="UniProtKB-KW"/>
</dbReference>
<dbReference type="GO" id="GO:0046872">
    <property type="term" value="F:metal ion binding"/>
    <property type="evidence" value="ECO:0007669"/>
    <property type="project" value="UniProtKB-KW"/>
</dbReference>
<dbReference type="GO" id="GO:1990817">
    <property type="term" value="F:poly(A) RNA polymerase activity"/>
    <property type="evidence" value="ECO:0000314"/>
    <property type="project" value="FlyBase"/>
</dbReference>
<dbReference type="GO" id="GO:0003723">
    <property type="term" value="F:RNA binding"/>
    <property type="evidence" value="ECO:0007669"/>
    <property type="project" value="UniProtKB-KW"/>
</dbReference>
<dbReference type="GO" id="GO:0007616">
    <property type="term" value="P:long-term memory"/>
    <property type="evidence" value="ECO:0000315"/>
    <property type="project" value="FlyBase"/>
</dbReference>
<dbReference type="GO" id="GO:0031124">
    <property type="term" value="P:mRNA 3'-end processing"/>
    <property type="evidence" value="ECO:0000250"/>
    <property type="project" value="UniProtKB"/>
</dbReference>
<dbReference type="GO" id="GO:0031123">
    <property type="term" value="P:RNA 3'-end processing"/>
    <property type="evidence" value="ECO:0000318"/>
    <property type="project" value="GO_Central"/>
</dbReference>
<dbReference type="CDD" id="cd05402">
    <property type="entry name" value="NT_PAP_TUTase"/>
    <property type="match status" value="1"/>
</dbReference>
<dbReference type="Gene3D" id="1.10.1410.10">
    <property type="match status" value="1"/>
</dbReference>
<dbReference type="Gene3D" id="3.30.460.10">
    <property type="entry name" value="Beta Polymerase, domain 2"/>
    <property type="match status" value="1"/>
</dbReference>
<dbReference type="InterPro" id="IPR054708">
    <property type="entry name" value="MTPAP-like_central"/>
</dbReference>
<dbReference type="InterPro" id="IPR043519">
    <property type="entry name" value="NT_sf"/>
</dbReference>
<dbReference type="InterPro" id="IPR002058">
    <property type="entry name" value="PAP_assoc"/>
</dbReference>
<dbReference type="PANTHER" id="PTHR12271">
    <property type="entry name" value="POLY A POLYMERASE CID PAP -RELATED"/>
    <property type="match status" value="1"/>
</dbReference>
<dbReference type="PANTHER" id="PTHR12271:SF40">
    <property type="entry name" value="POLY(A) RNA POLYMERASE GLD2"/>
    <property type="match status" value="1"/>
</dbReference>
<dbReference type="Pfam" id="PF22600">
    <property type="entry name" value="MTPAP-like_central"/>
    <property type="match status" value="1"/>
</dbReference>
<dbReference type="Pfam" id="PF03828">
    <property type="entry name" value="PAP_assoc"/>
    <property type="match status" value="1"/>
</dbReference>
<dbReference type="SUPFAM" id="SSF81301">
    <property type="entry name" value="Nucleotidyltransferase"/>
    <property type="match status" value="1"/>
</dbReference>
<dbReference type="SUPFAM" id="SSF81631">
    <property type="entry name" value="PAP/OAS1 substrate-binding domain"/>
    <property type="match status" value="1"/>
</dbReference>
<evidence type="ECO:0000250" key="1"/>
<evidence type="ECO:0000256" key="2">
    <source>
        <dbReference type="SAM" id="MobiDB-lite"/>
    </source>
</evidence>
<evidence type="ECO:0000269" key="3">
    <source>
    </source>
</evidence>
<evidence type="ECO:0000303" key="4">
    <source>
    </source>
</evidence>
<evidence type="ECO:0000305" key="5"/>